<proteinExistence type="evidence at protein level"/>
<sequence length="623" mass="71057">MEDLSDVFDIYAICACCKVAPTSEGTKNEPFSPRTFRGLGNKGTLPWKCNSVDMKYFSSVTTYVDESKYEKLKWKRERYLRMEASQGGGDNTSGGDNTHGGDNADKLQNVVVMGRSSWESIPKQYKPLPNRINVVLSKTLTKEDVKEKVFIIDSIDDLLLLLKKLKYYKCFIIGGAQVYRECLSRNLIKQIYFTRINGAYPCDVFFPEFDESQFRVTSVSEVYNSKGTTLDFLVYSKVGGGVDGGASNGSTATALRRTAMRSTAMRRNVAPRTAAPPMGPHSRANGERAPPRARARRTTPRQRKTTSCTSALTTKWGRKTRSTCKILKFTTASRLMQHPEYQYLGIIYDIIMNGNKQGDRTGVGVMSNFGYMMKFNLSEYFPLLTTKKLFLRGIIEELLWFIRGETNGNTLLNKNVRIWEANGTREFLDNRKLFHREVNDLGPIYGFQWRHFGAEYTNMHDNYEDKGVDQLKNVIHLIKNEPTSRRIILCAWNVKDLDQMALPPCHILCQFYVFDGKLSCIMYQRSCDLGLGVPFNIASYSIFTHMIAQVCNLQPAQFIHILGNAHVYNNHVDSLKVQLNRIPYPFPTLKLNPEVKNIEDFTISDFTIENYVHHDKITMEMAA</sequence>
<evidence type="ECO:0000250" key="1"/>
<evidence type="ECO:0000256" key="2">
    <source>
        <dbReference type="SAM" id="MobiDB-lite"/>
    </source>
</evidence>
<evidence type="ECO:0000269" key="3">
    <source>
    </source>
</evidence>
<evidence type="ECO:0000305" key="4"/>
<evidence type="ECO:0007829" key="5">
    <source>
        <dbReference type="PDB" id="2BL9"/>
    </source>
</evidence>
<name>DRTS_PLAVI</name>
<comment type="function">
    <text>Bifunctional enzyme. Involved in de novo dTMP biosynthesis. Key enzyme in folate metabolism. Catalyzes an essential reaction for de novo glycine and purine synthesis, DNA precursor synthesis, and for the conversion of dUMP to dTMP.</text>
</comment>
<comment type="catalytic activity">
    <reaction evidence="3">
        <text>(6S)-5,6,7,8-tetrahydrofolate + NADP(+) = 7,8-dihydrofolate + NADPH + H(+)</text>
        <dbReference type="Rhea" id="RHEA:15009"/>
        <dbReference type="ChEBI" id="CHEBI:15378"/>
        <dbReference type="ChEBI" id="CHEBI:57451"/>
        <dbReference type="ChEBI" id="CHEBI:57453"/>
        <dbReference type="ChEBI" id="CHEBI:57783"/>
        <dbReference type="ChEBI" id="CHEBI:58349"/>
        <dbReference type="EC" id="1.5.1.3"/>
    </reaction>
</comment>
<comment type="catalytic activity">
    <reaction evidence="3">
        <text>dUMP + (6R)-5,10-methylene-5,6,7,8-tetrahydrofolate = 7,8-dihydrofolate + dTMP</text>
        <dbReference type="Rhea" id="RHEA:12104"/>
        <dbReference type="ChEBI" id="CHEBI:15636"/>
        <dbReference type="ChEBI" id="CHEBI:57451"/>
        <dbReference type="ChEBI" id="CHEBI:63528"/>
        <dbReference type="ChEBI" id="CHEBI:246422"/>
        <dbReference type="EC" id="2.1.1.45"/>
    </reaction>
</comment>
<comment type="pathway">
    <text>Cofactor biosynthesis; tetrahydrofolate biosynthesis; 5,6,7,8-tetrahydrofolate from 7,8-dihydrofolate: step 1/1.</text>
</comment>
<comment type="subunit">
    <text evidence="3">Homodimer.</text>
</comment>
<comment type="domain">
    <text>The repeat region is missing in the pyrimethamine-resistant isolates BUR-98 and BUR-151.</text>
</comment>
<comment type="similarity">
    <text evidence="4">In the N-terminal section; belongs to the dihydrofolate reductase family.</text>
</comment>
<comment type="similarity">
    <text evidence="4">In the C-terminal section; belongs to the thymidylate synthase family.</text>
</comment>
<organism>
    <name type="scientific">Plasmodium vivax</name>
    <dbReference type="NCBI Taxonomy" id="5855"/>
    <lineage>
        <taxon>Eukaryota</taxon>
        <taxon>Sar</taxon>
        <taxon>Alveolata</taxon>
        <taxon>Apicomplexa</taxon>
        <taxon>Aconoidasida</taxon>
        <taxon>Haemosporida</taxon>
        <taxon>Plasmodiidae</taxon>
        <taxon>Plasmodium</taxon>
        <taxon>Plasmodium (Plasmodium)</taxon>
    </lineage>
</organism>
<protein>
    <recommendedName>
        <fullName>Bifunctional dihydrofolate reductase-thymidylate synthase</fullName>
        <shortName>DHFR-TS</shortName>
    </recommendedName>
    <domain>
        <recommendedName>
            <fullName>Dihydrofolate reductase</fullName>
            <ecNumber>1.5.1.3</ecNumber>
        </recommendedName>
    </domain>
    <domain>
        <recommendedName>
            <fullName>Thymidylate synthase</fullName>
            <ecNumber>2.1.1.45</ecNumber>
        </recommendedName>
    </domain>
</protein>
<dbReference type="EC" id="1.5.1.3"/>
<dbReference type="EC" id="2.1.1.45"/>
<dbReference type="EMBL" id="X98123">
    <property type="protein sequence ID" value="CAA66805.1"/>
    <property type="molecule type" value="Genomic_DNA"/>
</dbReference>
<dbReference type="PIR" id="JC6568">
    <property type="entry name" value="JC6568"/>
</dbReference>
<dbReference type="PDB" id="2BL9">
    <property type="method" value="X-ray"/>
    <property type="resolution" value="1.90 A"/>
    <property type="chains" value="A=1-238"/>
</dbReference>
<dbReference type="PDB" id="2BLA">
    <property type="method" value="X-ray"/>
    <property type="resolution" value="2.50 A"/>
    <property type="chains" value="A=1-238"/>
</dbReference>
<dbReference type="PDB" id="2BLB">
    <property type="method" value="X-ray"/>
    <property type="resolution" value="3.00 A"/>
    <property type="chains" value="A=1-238"/>
</dbReference>
<dbReference type="PDB" id="2BLC">
    <property type="method" value="X-ray"/>
    <property type="resolution" value="2.25 A"/>
    <property type="chains" value="A=1-238"/>
</dbReference>
<dbReference type="PDBsum" id="2BL9"/>
<dbReference type="PDBsum" id="2BLA"/>
<dbReference type="PDBsum" id="2BLB"/>
<dbReference type="PDBsum" id="2BLC"/>
<dbReference type="SMR" id="O02604"/>
<dbReference type="BindingDB" id="O02604"/>
<dbReference type="ChEMBL" id="CHEMBL5291504"/>
<dbReference type="DrugCentral" id="O02604"/>
<dbReference type="VEuPathDB" id="PlasmoDB:PVP01_0526600"/>
<dbReference type="VEuPathDB" id="PlasmoDB:PVPAM_050034200"/>
<dbReference type="VEuPathDB" id="PlasmoDB:PVW1_050031800"/>
<dbReference type="VEuPathDB" id="PlasmoDB:PVX_089950"/>
<dbReference type="BRENDA" id="1.5.1.3">
    <property type="organism ID" value="4894"/>
</dbReference>
<dbReference type="UniPathway" id="UPA00077">
    <property type="reaction ID" value="UER00158"/>
</dbReference>
<dbReference type="EvolutionaryTrace" id="O02604"/>
<dbReference type="GO" id="GO:0005829">
    <property type="term" value="C:cytosol"/>
    <property type="evidence" value="ECO:0007669"/>
    <property type="project" value="TreeGrafter"/>
</dbReference>
<dbReference type="GO" id="GO:0005739">
    <property type="term" value="C:mitochondrion"/>
    <property type="evidence" value="ECO:0007669"/>
    <property type="project" value="TreeGrafter"/>
</dbReference>
<dbReference type="GO" id="GO:0004146">
    <property type="term" value="F:dihydrofolate reductase activity"/>
    <property type="evidence" value="ECO:0007669"/>
    <property type="project" value="UniProtKB-EC"/>
</dbReference>
<dbReference type="GO" id="GO:0004799">
    <property type="term" value="F:thymidylate synthase activity"/>
    <property type="evidence" value="ECO:0007669"/>
    <property type="project" value="UniProtKB-EC"/>
</dbReference>
<dbReference type="GO" id="GO:0006231">
    <property type="term" value="P:dTMP biosynthetic process"/>
    <property type="evidence" value="ECO:0007669"/>
    <property type="project" value="InterPro"/>
</dbReference>
<dbReference type="GO" id="GO:0032259">
    <property type="term" value="P:methylation"/>
    <property type="evidence" value="ECO:0007669"/>
    <property type="project" value="UniProtKB-KW"/>
</dbReference>
<dbReference type="GO" id="GO:0006730">
    <property type="term" value="P:one-carbon metabolic process"/>
    <property type="evidence" value="ECO:0007669"/>
    <property type="project" value="UniProtKB-KW"/>
</dbReference>
<dbReference type="GO" id="GO:0046654">
    <property type="term" value="P:tetrahydrofolate biosynthetic process"/>
    <property type="evidence" value="ECO:0007669"/>
    <property type="project" value="UniProtKB-UniPathway"/>
</dbReference>
<dbReference type="CDD" id="cd00209">
    <property type="entry name" value="DHFR"/>
    <property type="match status" value="1"/>
</dbReference>
<dbReference type="CDD" id="cd00351">
    <property type="entry name" value="TS_Pyrimidine_HMase"/>
    <property type="match status" value="1"/>
</dbReference>
<dbReference type="FunFam" id="3.30.572.10:FF:000004">
    <property type="entry name" value="Bifunctional dihydrofolate reductase-thymidylate synthase"/>
    <property type="match status" value="1"/>
</dbReference>
<dbReference type="FunFam" id="3.40.430.10:FF:000007">
    <property type="entry name" value="Bifunctional dihydrofolate reductase-thymidylate synthase"/>
    <property type="match status" value="1"/>
</dbReference>
<dbReference type="Gene3D" id="3.40.430.10">
    <property type="entry name" value="Dihydrofolate Reductase, subunit A"/>
    <property type="match status" value="1"/>
</dbReference>
<dbReference type="Gene3D" id="3.30.572.10">
    <property type="entry name" value="Thymidylate synthase/dCMP hydroxymethylase domain"/>
    <property type="match status" value="1"/>
</dbReference>
<dbReference type="HAMAP" id="MF_00008">
    <property type="entry name" value="Thymidy_synth_bact"/>
    <property type="match status" value="1"/>
</dbReference>
<dbReference type="InterPro" id="IPR024072">
    <property type="entry name" value="DHFR-like_dom_sf"/>
</dbReference>
<dbReference type="InterPro" id="IPR012262">
    <property type="entry name" value="DHFR-TS"/>
</dbReference>
<dbReference type="InterPro" id="IPR017925">
    <property type="entry name" value="DHFR_CS"/>
</dbReference>
<dbReference type="InterPro" id="IPR001796">
    <property type="entry name" value="DHFR_dom"/>
</dbReference>
<dbReference type="InterPro" id="IPR045097">
    <property type="entry name" value="Thymidate_synth/dCMP_Mease"/>
</dbReference>
<dbReference type="InterPro" id="IPR023451">
    <property type="entry name" value="Thymidate_synth/dCMP_Mease_dom"/>
</dbReference>
<dbReference type="InterPro" id="IPR036926">
    <property type="entry name" value="Thymidate_synth/dCMP_Mease_sf"/>
</dbReference>
<dbReference type="InterPro" id="IPR000398">
    <property type="entry name" value="Thymidylate_synthase"/>
</dbReference>
<dbReference type="InterPro" id="IPR020940">
    <property type="entry name" value="Thymidylate_synthase_AS"/>
</dbReference>
<dbReference type="NCBIfam" id="NF002497">
    <property type="entry name" value="PRK01827.1-3"/>
    <property type="match status" value="1"/>
</dbReference>
<dbReference type="NCBIfam" id="TIGR03284">
    <property type="entry name" value="thym_sym"/>
    <property type="match status" value="1"/>
</dbReference>
<dbReference type="PANTHER" id="PTHR11548:SF2">
    <property type="entry name" value="THYMIDYLATE SYNTHASE"/>
    <property type="match status" value="1"/>
</dbReference>
<dbReference type="PANTHER" id="PTHR11548">
    <property type="entry name" value="THYMIDYLATE SYNTHASE 1"/>
    <property type="match status" value="1"/>
</dbReference>
<dbReference type="Pfam" id="PF00186">
    <property type="entry name" value="DHFR_1"/>
    <property type="match status" value="1"/>
</dbReference>
<dbReference type="Pfam" id="PF00303">
    <property type="entry name" value="Thymidylat_synt"/>
    <property type="match status" value="1"/>
</dbReference>
<dbReference type="PIRSF" id="PIRSF000389">
    <property type="entry name" value="DHFR-TS"/>
    <property type="match status" value="1"/>
</dbReference>
<dbReference type="PRINTS" id="PR00108">
    <property type="entry name" value="THYMDSNTHASE"/>
</dbReference>
<dbReference type="SUPFAM" id="SSF53597">
    <property type="entry name" value="Dihydrofolate reductase-like"/>
    <property type="match status" value="1"/>
</dbReference>
<dbReference type="SUPFAM" id="SSF55831">
    <property type="entry name" value="Thymidylate synthase/dCMP hydroxymethylase"/>
    <property type="match status" value="1"/>
</dbReference>
<dbReference type="PROSITE" id="PS00075">
    <property type="entry name" value="DHFR_1"/>
    <property type="match status" value="1"/>
</dbReference>
<dbReference type="PROSITE" id="PS51330">
    <property type="entry name" value="DHFR_2"/>
    <property type="match status" value="1"/>
</dbReference>
<dbReference type="PROSITE" id="PS00091">
    <property type="entry name" value="THYMIDYLATE_SYNTHASE"/>
    <property type="match status" value="1"/>
</dbReference>
<keyword id="KW-0002">3D-structure</keyword>
<keyword id="KW-0489">Methyltransferase</keyword>
<keyword id="KW-0511">Multifunctional enzyme</keyword>
<keyword id="KW-0521">NADP</keyword>
<keyword id="KW-0545">Nucleotide biosynthesis</keyword>
<keyword id="KW-0554">One-carbon metabolism</keyword>
<keyword id="KW-0560">Oxidoreductase</keyword>
<keyword id="KW-0677">Repeat</keyword>
<keyword id="KW-0808">Transferase</keyword>
<feature type="chain" id="PRO_0000186351" description="Bifunctional dihydrofolate reductase-thymidylate synthase">
    <location>
        <begin position="1"/>
        <end position="623"/>
    </location>
</feature>
<feature type="domain" description="DHFR">
    <location>
        <begin position="9"/>
        <end position="237"/>
    </location>
</feature>
<feature type="repeat" description="1">
    <location>
        <begin position="88"/>
        <end position="91"/>
    </location>
</feature>
<feature type="repeat" description="2">
    <location>
        <begin position="94"/>
        <end position="97"/>
    </location>
</feature>
<feature type="repeat" description="3">
    <location>
        <begin position="100"/>
        <end position="103"/>
    </location>
</feature>
<feature type="region of interest" description="3 X 4 AA repeats of G-G-D-N">
    <location>
        <begin position="88"/>
        <end position="103"/>
    </location>
</feature>
<feature type="region of interest" description="Disordered" evidence="2">
    <location>
        <begin position="263"/>
        <end position="309"/>
    </location>
</feature>
<feature type="region of interest" description="Thymidylate synthase">
    <location>
        <begin position="337"/>
        <end position="623"/>
    </location>
</feature>
<feature type="compositionally biased region" description="Basic residues" evidence="2">
    <location>
        <begin position="291"/>
        <end position="304"/>
    </location>
</feature>
<feature type="active site" evidence="1">
    <location>
        <position position="505"/>
    </location>
</feature>
<feature type="binding site">
    <location>
        <begin position="13"/>
        <end position="14"/>
    </location>
    <ligand>
        <name>substrate</name>
    </ligand>
</feature>
<feature type="binding site">
    <location>
        <position position="15"/>
    </location>
    <ligand>
        <name>NADP(+)</name>
        <dbReference type="ChEBI" id="CHEBI:58349"/>
    </ligand>
</feature>
<feature type="binding site">
    <location>
        <begin position="38"/>
        <end position="44"/>
    </location>
    <ligand>
        <name>NADP(+)</name>
        <dbReference type="ChEBI" id="CHEBI:58349"/>
    </ligand>
</feature>
<feature type="binding site">
    <location>
        <position position="53"/>
    </location>
    <ligand>
        <name>substrate</name>
    </ligand>
</feature>
<feature type="binding site">
    <location>
        <begin position="115"/>
        <end position="117"/>
    </location>
    <ligand>
        <name>NADP(+)</name>
        <dbReference type="ChEBI" id="CHEBI:58349"/>
    </ligand>
</feature>
<feature type="binding site">
    <location>
        <begin position="137"/>
        <end position="139"/>
    </location>
    <ligand>
        <name>NADP(+)</name>
        <dbReference type="ChEBI" id="CHEBI:58349"/>
    </ligand>
</feature>
<feature type="binding site">
    <location>
        <position position="153"/>
    </location>
    <ligand>
        <name>NADP(+)</name>
        <dbReference type="ChEBI" id="CHEBI:58349"/>
    </ligand>
</feature>
<feature type="binding site">
    <location>
        <position position="173"/>
    </location>
    <ligand>
        <name>substrate</name>
    </ligand>
</feature>
<feature type="binding site">
    <location>
        <begin position="174"/>
        <end position="181"/>
    </location>
    <ligand>
        <name>NADP(+)</name>
        <dbReference type="ChEBI" id="CHEBI:58349"/>
    </ligand>
</feature>
<feature type="binding site">
    <location>
        <position position="179"/>
    </location>
    <ligand>
        <name>substrate</name>
    </ligand>
</feature>
<feature type="binding site">
    <location>
        <position position="194"/>
    </location>
    <ligand>
        <name>substrate</name>
    </ligand>
</feature>
<feature type="binding site" evidence="1">
    <location>
        <position position="360"/>
    </location>
    <ligand>
        <name>dUMP</name>
        <dbReference type="ChEBI" id="CHEBI:246422"/>
    </ligand>
</feature>
<feature type="binding site" evidence="1">
    <location>
        <position position="506"/>
    </location>
    <ligand>
        <name>dUMP</name>
        <dbReference type="ChEBI" id="CHEBI:246422"/>
    </ligand>
</feature>
<feature type="binding site" evidence="1">
    <location>
        <begin position="524"/>
        <end position="528"/>
    </location>
    <ligand>
        <name>dUMP</name>
        <dbReference type="ChEBI" id="CHEBI:246422"/>
    </ligand>
</feature>
<feature type="binding site" evidence="1">
    <location>
        <position position="536"/>
    </location>
    <ligand>
        <name>dUMP</name>
        <dbReference type="ChEBI" id="CHEBI:246422"/>
    </ligand>
</feature>
<feature type="binding site" evidence="1">
    <location>
        <begin position="566"/>
        <end position="568"/>
    </location>
    <ligand>
        <name>dUMP</name>
        <dbReference type="ChEBI" id="CHEBI:246422"/>
    </ligand>
</feature>
<feature type="sequence variant" description="In the pyrimethamine-resistant isolates BUR-98 and BUR-151; interferes with inhibitor binding.">
    <original>S</original>
    <variation>R</variation>
    <location>
        <position position="58"/>
    </location>
</feature>
<feature type="sequence variant" description="In the pyrimethamine-resistant isolates BUR-98 and BUR-151." evidence="3">
    <original>S</original>
    <variation>N</variation>
    <location>
        <position position="117"/>
    </location>
</feature>
<feature type="helix" evidence="5">
    <location>
        <begin position="4"/>
        <end position="7"/>
    </location>
</feature>
<feature type="strand" evidence="5">
    <location>
        <begin position="10"/>
        <end position="19"/>
    </location>
</feature>
<feature type="strand" evidence="5">
    <location>
        <begin position="23"/>
        <end position="26"/>
    </location>
</feature>
<feature type="strand" evidence="5">
    <location>
        <begin position="38"/>
        <end position="41"/>
    </location>
</feature>
<feature type="strand" evidence="5">
    <location>
        <begin position="46"/>
        <end position="48"/>
    </location>
</feature>
<feature type="helix" evidence="5">
    <location>
        <begin position="51"/>
        <end position="62"/>
    </location>
</feature>
<feature type="helix" evidence="5">
    <location>
        <begin position="66"/>
        <end position="68"/>
    </location>
</feature>
<feature type="helix" evidence="5">
    <location>
        <begin position="69"/>
        <end position="83"/>
    </location>
</feature>
<feature type="strand" evidence="5">
    <location>
        <begin position="109"/>
        <end position="114"/>
    </location>
</feature>
<feature type="helix" evidence="5">
    <location>
        <begin position="115"/>
        <end position="119"/>
    </location>
</feature>
<feature type="helix" evidence="5">
    <location>
        <begin position="123"/>
        <end position="125"/>
    </location>
</feature>
<feature type="strand" evidence="5">
    <location>
        <begin position="131"/>
        <end position="136"/>
    </location>
</feature>
<feature type="turn" evidence="5">
    <location>
        <begin position="142"/>
        <end position="144"/>
    </location>
</feature>
<feature type="strand" evidence="5">
    <location>
        <begin position="150"/>
        <end position="153"/>
    </location>
</feature>
<feature type="helix" evidence="5">
    <location>
        <begin position="155"/>
        <end position="163"/>
    </location>
</feature>
<feature type="strand" evidence="5">
    <location>
        <begin position="170"/>
        <end position="174"/>
    </location>
</feature>
<feature type="helix" evidence="5">
    <location>
        <begin position="176"/>
        <end position="184"/>
    </location>
</feature>
<feature type="strand" evidence="5">
    <location>
        <begin position="189"/>
        <end position="200"/>
    </location>
</feature>
<feature type="strand" evidence="5">
    <location>
        <begin position="203"/>
        <end position="205"/>
    </location>
</feature>
<feature type="helix" evidence="5">
    <location>
        <begin position="211"/>
        <end position="213"/>
    </location>
</feature>
<feature type="strand" evidence="5">
    <location>
        <begin position="214"/>
        <end position="219"/>
    </location>
</feature>
<feature type="strand" evidence="5">
    <location>
        <begin position="223"/>
        <end position="225"/>
    </location>
</feature>
<feature type="strand" evidence="5">
    <location>
        <begin position="228"/>
        <end position="237"/>
    </location>
</feature>
<reference key="1">
    <citation type="journal article" date="1998" name="Gene">
        <title>Analysis of the Plasmodium vivax dihydrofolate reductase-thymidylate synthase gene sequence.</title>
        <authorList>
            <person name="Eldin de Pecoulas P."/>
            <person name="Basco L.K."/>
            <person name="Tahar R."/>
            <person name="Ouatas T."/>
            <person name="Mazabraud A."/>
        </authorList>
    </citation>
    <scope>NUCLEOTIDE SEQUENCE [GENOMIC DNA]</scope>
    <source>
        <strain>Isolate Ari/Pakistan</strain>
        <strain>Isolate BUR-151</strain>
        <strain>Isolate BUR-98</strain>
    </source>
</reference>
<reference key="2">
    <citation type="journal article" date="2005" name="Proc. Natl. Acad. Sci. U.S.A.">
        <title>Crystal structure of dihydrofolate reductase from Plasmodium vivax: pyrimethamine displacement linked with mutation-induced resistance.</title>
        <authorList>
            <person name="Kongsaeree P."/>
            <person name="Khongsuk P."/>
            <person name="Leartsakulpanich U."/>
            <person name="Chitnumsub P."/>
            <person name="Tarnchompoo B."/>
            <person name="Walkinshaw M.D."/>
            <person name="Yuthavong Y."/>
        </authorList>
    </citation>
    <scope>X-RAY CRYSTALLOGRAPHY (1.90 ANGSTROMS) OF 1-238 OF WILD TYPE AND MUTANT ARG-58/ASN-117 IN COMPLEXES WITH THE SYNTHETIC INHIBITORS PYR; PYR20 AND WITH NADP</scope>
    <scope>SUBUNIT</scope>
    <scope>CHARACTERIZATION OF PYRIMETHAMINE-RESISTANT VARIANT ASN-117</scope>
    <scope>CATALYTIC ACTIVITY</scope>
</reference>
<accession>O02604</accession>
<accession>O15873</accession>